<proteinExistence type="inferred from homology"/>
<name>RPOB_DEHMC</name>
<sequence length="1273" mass="141526">MVSMLPKADAATGVIRKSYAQLPEVVNVPNLIEMQLQSFVWFQEEGLRELIEEISPIKDFVGNRLELEFIGYEFREPRLSEYECTQRDQTYSVPLYVKARLIVKTTGEIKEPFDLFFGDIPLMTALGTFITSGTERVVVSQLLRSPGVYFTISDDPATGRPLCHTNLIPSRGAWLEFETSNRDVISVKIDGRRKIPVSTLLRAIGYSDDLDILNLFEVIDNDPERHYIQSSIDRDPLIKDEISALIDIYSRLRPGDPPNADNARKLINEMFFDPQHYDLGKVGRYKVNRRLELPSREVGENRALTREDIVAIIQRIIMVNNGQDTPDDIDHLGNRRIRTVGELVQNQFRIGLVRLERVARERMSIVNLEMVTPSALVNIRPVVSAVKEFFGGSQLSQFMDQTNPLAEITNKRRLSAMGPGGLSRERAGFDVRDVHYSHYGRICPIETPEGPNIGLIGSLATYSRINRYGFVETPYRKVYSKLKNNDKKLVGLKLKIEISEKGKVLAAAGSTISEDSFKLISKLPECDISVMPFVSAEVKYMPADEEDRYIIAQANTRLDEKGYFLDDRIEARSAERYVVEPPDKIDYMDVSPKQIFSVAASLIPFLEHDDANRALMGANMQRQAVPLLRAEAPMVATGMEREAARYSGQVIFAKHAGVASSVTSEKIIIRTAEGGHDEYLLKKFVRTNQGTCINQHAIINKGQKIAAGQVLADSSATENGELALGQNCVVAFMSWQGFNYEDAIILSERLVREDAFTSIHITKHELEARDTKLGVEEITRDIPNVGEESLRELDEDGIIRIGAEVGPDDILVGKITPKGETELSAEEKLLRAIFGEKAREVKDTSLRMPHGEWGKVINVRIFSRDSGDDLPARVNKWVQVWVAQKRKVSVGDKLAGRHGNKGVISIIAPVEDMPYLPDGTPVDVVLNPIGVPSRMNLGQILETHLGWAGHLLGFRVATPVFDGADDTVIEDALARSWLSAKAGAIDMSPENKRPSADAHKAIEWIKQQGFDGKKIFDEKHPGLAKEVSLKLWLKDMGVDASALSGAELEKKAYDVSSQSRLPSPIVGKSVLRDGRTGETFDQPVTVGNMYILKLIHLVEDKVHARATGPYSLISQQPLGGKAQFGGQRFGEMEVWAMYAYGTAHNLQEMLTIKSDDIAGRAKAYESIVKGEDVLQPGVPESFKVLVKELQSLGLAVEVINEEVKIAPSEKVSSLNEGNLPASDEISAEILPETLYANTEDISEDSMMSVIDADDQDLVVSSNDEEVSENDERS</sequence>
<comment type="function">
    <text evidence="1">DNA-dependent RNA polymerase catalyzes the transcription of DNA into RNA using the four ribonucleoside triphosphates as substrates.</text>
</comment>
<comment type="catalytic activity">
    <reaction evidence="1">
        <text>RNA(n) + a ribonucleoside 5'-triphosphate = RNA(n+1) + diphosphate</text>
        <dbReference type="Rhea" id="RHEA:21248"/>
        <dbReference type="Rhea" id="RHEA-COMP:14527"/>
        <dbReference type="Rhea" id="RHEA-COMP:17342"/>
        <dbReference type="ChEBI" id="CHEBI:33019"/>
        <dbReference type="ChEBI" id="CHEBI:61557"/>
        <dbReference type="ChEBI" id="CHEBI:140395"/>
        <dbReference type="EC" id="2.7.7.6"/>
    </reaction>
</comment>
<comment type="subunit">
    <text evidence="1">The RNAP catalytic core consists of 2 alpha, 1 beta, 1 beta' and 1 omega subunit. When a sigma factor is associated with the core the holoenzyme is formed, which can initiate transcription.</text>
</comment>
<comment type="similarity">
    <text evidence="1">Belongs to the RNA polymerase beta chain family.</text>
</comment>
<accession>Q3ZX01</accession>
<evidence type="ECO:0000255" key="1">
    <source>
        <dbReference type="HAMAP-Rule" id="MF_01321"/>
    </source>
</evidence>
<evidence type="ECO:0000256" key="2">
    <source>
        <dbReference type="SAM" id="MobiDB-lite"/>
    </source>
</evidence>
<dbReference type="EC" id="2.7.7.6" evidence="1"/>
<dbReference type="EMBL" id="AJ965256">
    <property type="protein sequence ID" value="CAI82766.1"/>
    <property type="molecule type" value="Genomic_DNA"/>
</dbReference>
<dbReference type="RefSeq" id="WP_011309117.1">
    <property type="nucleotide sequence ID" value="NC_007356.1"/>
</dbReference>
<dbReference type="SMR" id="Q3ZX01"/>
<dbReference type="KEGG" id="deh:cbdbA586"/>
<dbReference type="HOGENOM" id="CLU_000524_4_1_0"/>
<dbReference type="Proteomes" id="UP000000433">
    <property type="component" value="Chromosome"/>
</dbReference>
<dbReference type="GO" id="GO:0000428">
    <property type="term" value="C:DNA-directed RNA polymerase complex"/>
    <property type="evidence" value="ECO:0007669"/>
    <property type="project" value="UniProtKB-KW"/>
</dbReference>
<dbReference type="GO" id="GO:0003677">
    <property type="term" value="F:DNA binding"/>
    <property type="evidence" value="ECO:0007669"/>
    <property type="project" value="UniProtKB-UniRule"/>
</dbReference>
<dbReference type="GO" id="GO:0003899">
    <property type="term" value="F:DNA-directed RNA polymerase activity"/>
    <property type="evidence" value="ECO:0007669"/>
    <property type="project" value="UniProtKB-UniRule"/>
</dbReference>
<dbReference type="GO" id="GO:0032549">
    <property type="term" value="F:ribonucleoside binding"/>
    <property type="evidence" value="ECO:0007669"/>
    <property type="project" value="InterPro"/>
</dbReference>
<dbReference type="GO" id="GO:0006351">
    <property type="term" value="P:DNA-templated transcription"/>
    <property type="evidence" value="ECO:0007669"/>
    <property type="project" value="UniProtKB-UniRule"/>
</dbReference>
<dbReference type="CDD" id="cd00653">
    <property type="entry name" value="RNA_pol_B_RPB2"/>
    <property type="match status" value="1"/>
</dbReference>
<dbReference type="Gene3D" id="2.40.50.100">
    <property type="match status" value="1"/>
</dbReference>
<dbReference type="Gene3D" id="3.90.1100.10">
    <property type="match status" value="2"/>
</dbReference>
<dbReference type="Gene3D" id="2.30.150.10">
    <property type="entry name" value="DNA-directed RNA polymerase, beta subunit, external 1 domain"/>
    <property type="match status" value="1"/>
</dbReference>
<dbReference type="Gene3D" id="2.40.270.10">
    <property type="entry name" value="DNA-directed RNA polymerase, subunit 2, domain 6"/>
    <property type="match status" value="2"/>
</dbReference>
<dbReference type="Gene3D" id="3.90.1800.10">
    <property type="entry name" value="RNA polymerase alpha subunit dimerisation domain"/>
    <property type="match status" value="1"/>
</dbReference>
<dbReference type="Gene3D" id="3.90.1110.10">
    <property type="entry name" value="RNA polymerase Rpb2, domain 2"/>
    <property type="match status" value="1"/>
</dbReference>
<dbReference type="HAMAP" id="MF_01321">
    <property type="entry name" value="RNApol_bact_RpoB"/>
    <property type="match status" value="1"/>
</dbReference>
<dbReference type="InterPro" id="IPR042107">
    <property type="entry name" value="DNA-dir_RNA_pol_bsu_ext_1_sf"/>
</dbReference>
<dbReference type="InterPro" id="IPR019462">
    <property type="entry name" value="DNA-dir_RNA_pol_bsu_external_1"/>
</dbReference>
<dbReference type="InterPro" id="IPR015712">
    <property type="entry name" value="DNA-dir_RNA_pol_su2"/>
</dbReference>
<dbReference type="InterPro" id="IPR007120">
    <property type="entry name" value="DNA-dir_RNAP_su2_dom"/>
</dbReference>
<dbReference type="InterPro" id="IPR037033">
    <property type="entry name" value="DNA-dir_RNAP_su2_hyb_sf"/>
</dbReference>
<dbReference type="InterPro" id="IPR010243">
    <property type="entry name" value="RNA_pol_bsu_bac"/>
</dbReference>
<dbReference type="InterPro" id="IPR007121">
    <property type="entry name" value="RNA_pol_bsu_CS"/>
</dbReference>
<dbReference type="InterPro" id="IPR007644">
    <property type="entry name" value="RNA_pol_bsu_protrusion"/>
</dbReference>
<dbReference type="InterPro" id="IPR007642">
    <property type="entry name" value="RNA_pol_Rpb2_2"/>
</dbReference>
<dbReference type="InterPro" id="IPR037034">
    <property type="entry name" value="RNA_pol_Rpb2_2_sf"/>
</dbReference>
<dbReference type="InterPro" id="IPR007645">
    <property type="entry name" value="RNA_pol_Rpb2_3"/>
</dbReference>
<dbReference type="InterPro" id="IPR007641">
    <property type="entry name" value="RNA_pol_Rpb2_7"/>
</dbReference>
<dbReference type="NCBIfam" id="NF001616">
    <property type="entry name" value="PRK00405.1"/>
    <property type="match status" value="1"/>
</dbReference>
<dbReference type="PANTHER" id="PTHR20856">
    <property type="entry name" value="DNA-DIRECTED RNA POLYMERASE I SUBUNIT 2"/>
    <property type="match status" value="1"/>
</dbReference>
<dbReference type="Pfam" id="PF04563">
    <property type="entry name" value="RNA_pol_Rpb2_1"/>
    <property type="match status" value="1"/>
</dbReference>
<dbReference type="Pfam" id="PF04561">
    <property type="entry name" value="RNA_pol_Rpb2_2"/>
    <property type="match status" value="1"/>
</dbReference>
<dbReference type="Pfam" id="PF04565">
    <property type="entry name" value="RNA_pol_Rpb2_3"/>
    <property type="match status" value="1"/>
</dbReference>
<dbReference type="Pfam" id="PF10385">
    <property type="entry name" value="RNA_pol_Rpb2_45"/>
    <property type="match status" value="1"/>
</dbReference>
<dbReference type="Pfam" id="PF00562">
    <property type="entry name" value="RNA_pol_Rpb2_6"/>
    <property type="match status" value="1"/>
</dbReference>
<dbReference type="Pfam" id="PF04560">
    <property type="entry name" value="RNA_pol_Rpb2_7"/>
    <property type="match status" value="1"/>
</dbReference>
<dbReference type="SUPFAM" id="SSF64484">
    <property type="entry name" value="beta and beta-prime subunits of DNA dependent RNA-polymerase"/>
    <property type="match status" value="1"/>
</dbReference>
<dbReference type="PROSITE" id="PS01166">
    <property type="entry name" value="RNA_POL_BETA"/>
    <property type="match status" value="1"/>
</dbReference>
<reference key="1">
    <citation type="journal article" date="2005" name="Nat. Biotechnol.">
        <title>Genome sequence of the chlorinated compound-respiring bacterium Dehalococcoides species strain CBDB1.</title>
        <authorList>
            <person name="Kube M."/>
            <person name="Beck A."/>
            <person name="Zinder S.H."/>
            <person name="Kuhl H."/>
            <person name="Reinhardt R."/>
            <person name="Adrian L."/>
        </authorList>
    </citation>
    <scope>NUCLEOTIDE SEQUENCE [LARGE SCALE GENOMIC DNA]</scope>
    <source>
        <strain>CBDB1</strain>
    </source>
</reference>
<protein>
    <recommendedName>
        <fullName evidence="1">DNA-directed RNA polymerase subunit beta</fullName>
        <shortName evidence="1">RNAP subunit beta</shortName>
        <ecNumber evidence="1">2.7.7.6</ecNumber>
    </recommendedName>
    <alternativeName>
        <fullName evidence="1">RNA polymerase subunit beta</fullName>
    </alternativeName>
    <alternativeName>
        <fullName evidence="1">Transcriptase subunit beta</fullName>
    </alternativeName>
</protein>
<feature type="chain" id="PRO_0000224050" description="DNA-directed RNA polymerase subunit beta">
    <location>
        <begin position="1"/>
        <end position="1273"/>
    </location>
</feature>
<feature type="region of interest" description="Disordered" evidence="2">
    <location>
        <begin position="1252"/>
        <end position="1273"/>
    </location>
</feature>
<gene>
    <name evidence="1" type="primary">rpoB</name>
    <name type="ordered locus">cbdbA586</name>
</gene>
<keyword id="KW-0240">DNA-directed RNA polymerase</keyword>
<keyword id="KW-0548">Nucleotidyltransferase</keyword>
<keyword id="KW-0804">Transcription</keyword>
<keyword id="KW-0808">Transferase</keyword>
<organism>
    <name type="scientific">Dehalococcoides mccartyi (strain CBDB1)</name>
    <dbReference type="NCBI Taxonomy" id="255470"/>
    <lineage>
        <taxon>Bacteria</taxon>
        <taxon>Bacillati</taxon>
        <taxon>Chloroflexota</taxon>
        <taxon>Dehalococcoidia</taxon>
        <taxon>Dehalococcoidales</taxon>
        <taxon>Dehalococcoidaceae</taxon>
        <taxon>Dehalococcoides</taxon>
    </lineage>
</organism>